<dbReference type="EC" id="2.7.7.3" evidence="1"/>
<dbReference type="EMBL" id="CP001111">
    <property type="protein sequence ID" value="ACF51255.1"/>
    <property type="molecule type" value="Genomic_DNA"/>
</dbReference>
<dbReference type="RefSeq" id="WP_008267036.1">
    <property type="nucleotide sequence ID" value="NC_011071.1"/>
</dbReference>
<dbReference type="SMR" id="B4SS16"/>
<dbReference type="STRING" id="391008.Smal_1550"/>
<dbReference type="GeneID" id="97224934"/>
<dbReference type="KEGG" id="smt:Smal_1550"/>
<dbReference type="eggNOG" id="COG0669">
    <property type="taxonomic scope" value="Bacteria"/>
</dbReference>
<dbReference type="HOGENOM" id="CLU_100149_0_1_6"/>
<dbReference type="OrthoDB" id="9806661at2"/>
<dbReference type="UniPathway" id="UPA00241">
    <property type="reaction ID" value="UER00355"/>
</dbReference>
<dbReference type="Proteomes" id="UP000001867">
    <property type="component" value="Chromosome"/>
</dbReference>
<dbReference type="GO" id="GO:0005737">
    <property type="term" value="C:cytoplasm"/>
    <property type="evidence" value="ECO:0007669"/>
    <property type="project" value="UniProtKB-SubCell"/>
</dbReference>
<dbReference type="GO" id="GO:0005524">
    <property type="term" value="F:ATP binding"/>
    <property type="evidence" value="ECO:0007669"/>
    <property type="project" value="UniProtKB-KW"/>
</dbReference>
<dbReference type="GO" id="GO:0004595">
    <property type="term" value="F:pantetheine-phosphate adenylyltransferase activity"/>
    <property type="evidence" value="ECO:0007669"/>
    <property type="project" value="UniProtKB-UniRule"/>
</dbReference>
<dbReference type="GO" id="GO:0015937">
    <property type="term" value="P:coenzyme A biosynthetic process"/>
    <property type="evidence" value="ECO:0007669"/>
    <property type="project" value="UniProtKB-UniRule"/>
</dbReference>
<dbReference type="CDD" id="cd02163">
    <property type="entry name" value="PPAT"/>
    <property type="match status" value="1"/>
</dbReference>
<dbReference type="Gene3D" id="3.40.50.620">
    <property type="entry name" value="HUPs"/>
    <property type="match status" value="1"/>
</dbReference>
<dbReference type="HAMAP" id="MF_00151">
    <property type="entry name" value="PPAT_bact"/>
    <property type="match status" value="1"/>
</dbReference>
<dbReference type="InterPro" id="IPR004821">
    <property type="entry name" value="Cyt_trans-like"/>
</dbReference>
<dbReference type="InterPro" id="IPR001980">
    <property type="entry name" value="PPAT"/>
</dbReference>
<dbReference type="InterPro" id="IPR014729">
    <property type="entry name" value="Rossmann-like_a/b/a_fold"/>
</dbReference>
<dbReference type="NCBIfam" id="TIGR01510">
    <property type="entry name" value="coaD_prev_kdtB"/>
    <property type="match status" value="1"/>
</dbReference>
<dbReference type="NCBIfam" id="TIGR00125">
    <property type="entry name" value="cyt_tran_rel"/>
    <property type="match status" value="1"/>
</dbReference>
<dbReference type="PANTHER" id="PTHR21342">
    <property type="entry name" value="PHOSPHOPANTETHEINE ADENYLYLTRANSFERASE"/>
    <property type="match status" value="1"/>
</dbReference>
<dbReference type="PANTHER" id="PTHR21342:SF1">
    <property type="entry name" value="PHOSPHOPANTETHEINE ADENYLYLTRANSFERASE"/>
    <property type="match status" value="1"/>
</dbReference>
<dbReference type="Pfam" id="PF01467">
    <property type="entry name" value="CTP_transf_like"/>
    <property type="match status" value="1"/>
</dbReference>
<dbReference type="PRINTS" id="PR01020">
    <property type="entry name" value="LPSBIOSNTHSS"/>
</dbReference>
<dbReference type="SUPFAM" id="SSF52374">
    <property type="entry name" value="Nucleotidylyl transferase"/>
    <property type="match status" value="1"/>
</dbReference>
<comment type="function">
    <text evidence="1">Reversibly transfers an adenylyl group from ATP to 4'-phosphopantetheine, yielding dephospho-CoA (dPCoA) and pyrophosphate.</text>
</comment>
<comment type="catalytic activity">
    <reaction evidence="1">
        <text>(R)-4'-phosphopantetheine + ATP + H(+) = 3'-dephospho-CoA + diphosphate</text>
        <dbReference type="Rhea" id="RHEA:19801"/>
        <dbReference type="ChEBI" id="CHEBI:15378"/>
        <dbReference type="ChEBI" id="CHEBI:30616"/>
        <dbReference type="ChEBI" id="CHEBI:33019"/>
        <dbReference type="ChEBI" id="CHEBI:57328"/>
        <dbReference type="ChEBI" id="CHEBI:61723"/>
        <dbReference type="EC" id="2.7.7.3"/>
    </reaction>
</comment>
<comment type="cofactor">
    <cofactor evidence="1">
        <name>Mg(2+)</name>
        <dbReference type="ChEBI" id="CHEBI:18420"/>
    </cofactor>
</comment>
<comment type="pathway">
    <text evidence="1">Cofactor biosynthesis; coenzyme A biosynthesis; CoA from (R)-pantothenate: step 4/5.</text>
</comment>
<comment type="subunit">
    <text evidence="1">Homohexamer.</text>
</comment>
<comment type="subcellular location">
    <subcellularLocation>
        <location evidence="1">Cytoplasm</location>
    </subcellularLocation>
</comment>
<comment type="similarity">
    <text evidence="1">Belongs to the bacterial CoaD family.</text>
</comment>
<accession>B4SS16</accession>
<proteinExistence type="inferred from homology"/>
<feature type="chain" id="PRO_1000096844" description="Phosphopantetheine adenylyltransferase">
    <location>
        <begin position="1"/>
        <end position="169"/>
    </location>
</feature>
<feature type="binding site" evidence="1">
    <location>
        <begin position="14"/>
        <end position="15"/>
    </location>
    <ligand>
        <name>ATP</name>
        <dbReference type="ChEBI" id="CHEBI:30616"/>
    </ligand>
</feature>
<feature type="binding site" evidence="1">
    <location>
        <position position="14"/>
    </location>
    <ligand>
        <name>substrate</name>
    </ligand>
</feature>
<feature type="binding site" evidence="1">
    <location>
        <position position="22"/>
    </location>
    <ligand>
        <name>ATP</name>
        <dbReference type="ChEBI" id="CHEBI:30616"/>
    </ligand>
</feature>
<feature type="binding site" evidence="1">
    <location>
        <position position="46"/>
    </location>
    <ligand>
        <name>substrate</name>
    </ligand>
</feature>
<feature type="binding site" evidence="1">
    <location>
        <position position="78"/>
    </location>
    <ligand>
        <name>substrate</name>
    </ligand>
</feature>
<feature type="binding site" evidence="1">
    <location>
        <position position="92"/>
    </location>
    <ligand>
        <name>substrate</name>
    </ligand>
</feature>
<feature type="binding site" evidence="1">
    <location>
        <begin position="93"/>
        <end position="95"/>
    </location>
    <ligand>
        <name>ATP</name>
        <dbReference type="ChEBI" id="CHEBI:30616"/>
    </ligand>
</feature>
<feature type="binding site" evidence="1">
    <location>
        <position position="103"/>
    </location>
    <ligand>
        <name>ATP</name>
        <dbReference type="ChEBI" id="CHEBI:30616"/>
    </ligand>
</feature>
<feature type="binding site" evidence="1">
    <location>
        <begin position="128"/>
        <end position="134"/>
    </location>
    <ligand>
        <name>ATP</name>
        <dbReference type="ChEBI" id="CHEBI:30616"/>
    </ligand>
</feature>
<feature type="site" description="Transition state stabilizer" evidence="1">
    <location>
        <position position="22"/>
    </location>
</feature>
<reference key="1">
    <citation type="submission" date="2008-06" db="EMBL/GenBank/DDBJ databases">
        <title>Complete sequence of Stenotrophomonas maltophilia R551-3.</title>
        <authorList>
            <consortium name="US DOE Joint Genome Institute"/>
            <person name="Lucas S."/>
            <person name="Copeland A."/>
            <person name="Lapidus A."/>
            <person name="Glavina del Rio T."/>
            <person name="Dalin E."/>
            <person name="Tice H."/>
            <person name="Pitluck S."/>
            <person name="Chain P."/>
            <person name="Malfatti S."/>
            <person name="Shin M."/>
            <person name="Vergez L."/>
            <person name="Lang D."/>
            <person name="Schmutz J."/>
            <person name="Larimer F."/>
            <person name="Land M."/>
            <person name="Hauser L."/>
            <person name="Kyrpides N."/>
            <person name="Mikhailova N."/>
            <person name="Taghavi S."/>
            <person name="Monchy S."/>
            <person name="Newman L."/>
            <person name="Vangronsveld J."/>
            <person name="van der Lelie D."/>
            <person name="Richardson P."/>
        </authorList>
    </citation>
    <scope>NUCLEOTIDE SEQUENCE [LARGE SCALE GENOMIC DNA]</scope>
    <source>
        <strain>R551-3</strain>
    </source>
</reference>
<sequence>MTVANRRIAVYPGTFDPITNGHIDLVSRAAPLFEKVVVGVAQSPSKGPALPLEQRVQLARGALGHHSNVEVIGFDTLLAHFVRSVQGGVLLRGLRAVSDFEYEFQMASMNRHLIPEVETLFLTPAEQHSFISSSLVREIARLGGDVSGFVPAAVLEALRKVREAKSAQS</sequence>
<name>COAD_STRM5</name>
<gene>
    <name evidence="1" type="primary">coaD</name>
    <name type="ordered locus">Smal_1550</name>
</gene>
<evidence type="ECO:0000255" key="1">
    <source>
        <dbReference type="HAMAP-Rule" id="MF_00151"/>
    </source>
</evidence>
<keyword id="KW-0067">ATP-binding</keyword>
<keyword id="KW-0173">Coenzyme A biosynthesis</keyword>
<keyword id="KW-0963">Cytoplasm</keyword>
<keyword id="KW-0460">Magnesium</keyword>
<keyword id="KW-0547">Nucleotide-binding</keyword>
<keyword id="KW-0548">Nucleotidyltransferase</keyword>
<keyword id="KW-0808">Transferase</keyword>
<organism>
    <name type="scientific">Stenotrophomonas maltophilia (strain R551-3)</name>
    <dbReference type="NCBI Taxonomy" id="391008"/>
    <lineage>
        <taxon>Bacteria</taxon>
        <taxon>Pseudomonadati</taxon>
        <taxon>Pseudomonadota</taxon>
        <taxon>Gammaproteobacteria</taxon>
        <taxon>Lysobacterales</taxon>
        <taxon>Lysobacteraceae</taxon>
        <taxon>Stenotrophomonas</taxon>
        <taxon>Stenotrophomonas maltophilia group</taxon>
    </lineage>
</organism>
<protein>
    <recommendedName>
        <fullName evidence="1">Phosphopantetheine adenylyltransferase</fullName>
        <ecNumber evidence="1">2.7.7.3</ecNumber>
    </recommendedName>
    <alternativeName>
        <fullName evidence="1">Dephospho-CoA pyrophosphorylase</fullName>
    </alternativeName>
    <alternativeName>
        <fullName evidence="1">Pantetheine-phosphate adenylyltransferase</fullName>
        <shortName evidence="1">PPAT</shortName>
    </alternativeName>
</protein>